<proteinExistence type="evidence at protein level"/>
<reference key="1">
    <citation type="journal article" date="1990" name="J. Gen. Virol.">
        <title>Molecular cloning and sequencing of an Australian isolate of proviral bovine leukaemia virus DNA: comparison with other isolates.</title>
        <authorList>
            <person name="Coulston J."/>
            <person name="Naif H."/>
            <person name="Brandon R."/>
            <person name="Kumar S."/>
            <person name="Khan S."/>
            <person name="Daniel R.C.W."/>
            <person name="Lavin M.F."/>
        </authorList>
    </citation>
    <scope>NUCLEOTIDE SEQUENCE [GENOMIC DNA]</scope>
</reference>
<reference key="2">
    <citation type="journal article" date="1984" name="FEBS Lett.">
        <title>Identification of a potential protease-coding gene in the genomes of bovine leukemia and human T-cell leukemia viruses.</title>
        <authorList>
            <person name="Sagata N."/>
            <person name="Yasunaga T."/>
            <person name="Ikawa Y."/>
        </authorList>
    </citation>
    <scope>RIBOSOMAL FRAMESHIFT</scope>
</reference>
<reference key="3">
    <citation type="journal article" date="2002" name="J. Virol.">
        <title>Analysis of bovine leukemia virus gag membrane targeting and late domain function.</title>
        <authorList>
            <person name="Wang H."/>
            <person name="Norris K.M."/>
            <person name="Mansky L.M."/>
        </authorList>
    </citation>
    <scope>DOMAIN LATE-BUDDING</scope>
    <scope>MUTAGENESIS OF 100-PRO--TYR-103</scope>
</reference>
<comment type="function">
    <molecule>Gag-Pro polyprotein</molecule>
    <text evidence="1">The matrix domain targets Gag, Gag-Pro and Gag-Pro-Pol polyproteins to the plasma membrane via a multipartite membrane binding signal, that includes its myristoylated N-terminus.</text>
</comment>
<comment type="function">
    <molecule>Matrix protein p15</molecule>
    <text evidence="1">Matrix protein.</text>
</comment>
<comment type="function">
    <molecule>Capsid protein p24</molecule>
    <text evidence="2">Forms the spherical core of the virus that encapsulates the genomic RNA-nucleocapsid complex.</text>
</comment>
<comment type="function">
    <molecule>Nucleocapsid protein p12-pro</molecule>
    <text evidence="2">Binds strongly to viral nucleic acids and promote their aggregation. Also destabilizes the nucleic acids duplexes via highly structured zinc-binding motifs.</text>
</comment>
<comment type="function">
    <molecule>Protease</molecule>
    <text evidence="5">The aspartyl protease mediates proteolytic cleavages of Gag and Gag-Pol polyproteins during or shortly after the release of the virion from the plasma membrane. Cleavages take place as an ordered, step-wise cascade to yield mature proteins. This process is called maturation. Displays maximal activity during the budding process just prior to particle release from the cell.</text>
</comment>
<comment type="subunit">
    <molecule>Gag-Pro polyprotein</molecule>
    <text evidence="1">Homodimer; the homodimers are part of the immature particles. Interacts with human TSG101 and NEDD4; these interactions are essential for budding and release of viral particles.</text>
</comment>
<comment type="subunit">
    <molecule>Matrix protein p15</molecule>
    <text evidence="1">Homodimer; further assembles as homohexamers.</text>
</comment>
<comment type="subcellular location">
    <molecule>Matrix protein p15</molecule>
    <subcellularLocation>
        <location evidence="1">Virion</location>
    </subcellularLocation>
</comment>
<comment type="subcellular location">
    <molecule>Capsid protein p24</molecule>
    <subcellularLocation>
        <location evidence="1">Virion</location>
    </subcellularLocation>
</comment>
<comment type="subcellular location">
    <molecule>Nucleocapsid protein p12-pro</molecule>
    <subcellularLocation>
        <location evidence="1">Virion</location>
    </subcellularLocation>
</comment>
<comment type="alternative products">
    <event type="ribosomal frameshifting"/>
    <isoform>
        <id>P0DOI1-1</id>
        <name>Gag-Pro polyprotein</name>
        <sequence type="displayed"/>
    </isoform>
    <isoform>
        <id>P25058-1</id>
        <name>Gag polyprotein</name>
        <sequence type="external"/>
    </isoform>
    <isoform>
        <id>P25059-1</id>
        <name>Gag-Pro-Pol polyprotein</name>
        <sequence type="external"/>
    </isoform>
</comment>
<comment type="domain">
    <text evidence="1">Gag polyprotein: Late-budding domains (L domains) are short sequence motifs essential for viral particle release. They can occur individually or in close proximity within structural proteins. They interacts with sorting cellular proteins of the multivesicular body (MVB) pathway. Most of these proteins are class E vacuolar protein sorting factors belonging to ESCRT-I, ESCRT-II or ESCRT-III complexes. Matrix protein p15 contains one L domain: a PPXY motif which binds to the WW domains of the ubiquitin ligase NEDD4.</text>
</comment>
<comment type="PTM">
    <molecule>Gag-Pro polyprotein</molecule>
    <text evidence="2">Specific enzymatic cleavages by the viral protease yield mature proteins. The polyprotein is cleaved during and after budding, this process is termed maturation. The protease is autoproteolytically processed at its N- and C-termini.</text>
</comment>
<comment type="PTM">
    <text evidence="1 2">Gag polyprotein: Myristoylated. Myristoylation of the matrix (MA) domain mediates the transport and binding of Gag polyproteins to the host plasma membrane and is required for the assembly of viral particles.</text>
</comment>
<comment type="miscellaneous">
    <molecule>Isoform Gag-Pro polyprotein</molecule>
    <text evidence="7 8">Produced by -1 ribosomal frameshifting between gag-pro.</text>
</comment>
<name>PRO_BLVAU</name>
<organismHost>
    <name type="scientific">Bos taurus</name>
    <name type="common">Bovine</name>
    <dbReference type="NCBI Taxonomy" id="9913"/>
</organismHost>
<protein>
    <recommendedName>
        <fullName>Gag-Pro polyprotein</fullName>
    </recommendedName>
    <component>
        <recommendedName>
            <fullName>Matrix protein p15</fullName>
            <shortName>MA</shortName>
        </recommendedName>
    </component>
    <component>
        <recommendedName>
            <fullName>Capsid protein p24</fullName>
            <shortName>CA</shortName>
        </recommendedName>
    </component>
    <component>
        <recommendedName>
            <fullName>Nucleocapsid protein p12-pro</fullName>
        </recommendedName>
    </component>
    <component>
        <recommendedName>
            <fullName>Protease</fullName>
            <ecNumber evidence="5">3.4.23.-</ecNumber>
        </recommendedName>
    </component>
    <component>
        <recommendedName>
            <fullName>p13</fullName>
        </recommendedName>
    </component>
</protein>
<organism>
    <name type="scientific">Bovine leukemia virus (isolate Australian)</name>
    <name type="common">BLV</name>
    <dbReference type="NCBI Taxonomy" id="11903"/>
    <lineage>
        <taxon>Viruses</taxon>
        <taxon>Riboviria</taxon>
        <taxon>Pararnavirae</taxon>
        <taxon>Artverviricota</taxon>
        <taxon>Revtraviricetes</taxon>
        <taxon>Ortervirales</taxon>
        <taxon>Retroviridae</taxon>
        <taxon>Orthoretrovirinae</taxon>
        <taxon>Deltaretrovirus</taxon>
        <taxon>Bovine leukemia virus</taxon>
    </lineage>
</organism>
<feature type="initiator methionine" description="Removed; by host" evidence="3">
    <location>
        <position position="1"/>
    </location>
</feature>
<feature type="chain" id="PRO_0000442564" description="Gag-Pro polyprotein">
    <location>
        <begin position="2"/>
        <end position="571"/>
    </location>
</feature>
<feature type="chain" id="PRO_0000442565" description="Matrix protein p15">
    <location>
        <begin position="2"/>
        <end position="109"/>
    </location>
</feature>
<feature type="chain" id="PRO_0000442566" description="Capsid protein p24">
    <location>
        <begin position="110"/>
        <end position="323"/>
    </location>
</feature>
<feature type="chain" id="PRO_0000442567" description="Nucleocapsid protein p12-pro">
    <location>
        <begin position="324"/>
        <end position="419"/>
    </location>
</feature>
<feature type="chain" id="PRO_0000442568" description="Protease">
    <location>
        <begin position="420"/>
        <end position="544"/>
    </location>
</feature>
<feature type="chain" id="PRO_0000442569" description="p13">
    <location>
        <begin position="545"/>
        <end position="571"/>
    </location>
</feature>
<feature type="repeat">
    <location>
        <begin position="342"/>
        <end position="362"/>
    </location>
</feature>
<feature type="repeat">
    <location>
        <begin position="367"/>
        <end position="387"/>
    </location>
</feature>
<feature type="domain" description="Peptidase A2" evidence="5">
    <location>
        <begin position="447"/>
        <end position="525"/>
    </location>
</feature>
<feature type="zinc finger region" description="CCHC-type 1" evidence="4">
    <location>
        <begin position="345"/>
        <end position="362"/>
    </location>
</feature>
<feature type="zinc finger region" description="CCHC-type 2" evidence="4">
    <location>
        <begin position="370"/>
        <end position="387"/>
    </location>
</feature>
<feature type="short sequence motif" description="PPXY motif" evidence="6">
    <location>
        <begin position="100"/>
        <end position="103"/>
    </location>
</feature>
<feature type="active site" description="Protease; shared with dimeric partner" evidence="5">
    <location>
        <position position="452"/>
    </location>
</feature>
<feature type="site" description="Cleavage; by viral protease" evidence="1">
    <location>
        <begin position="109"/>
        <end position="110"/>
    </location>
</feature>
<feature type="site" description="Cleavage; by viral protease" evidence="1">
    <location>
        <begin position="323"/>
        <end position="324"/>
    </location>
</feature>
<feature type="site" description="Cleavage; by viral protease" evidence="1">
    <location>
        <begin position="419"/>
        <end position="420"/>
    </location>
</feature>
<feature type="site" description="Cleavage; by viral protease" evidence="1">
    <location>
        <begin position="544"/>
        <end position="545"/>
    </location>
</feature>
<feature type="lipid moiety-binding region" description="N-myristoyl glycine; by host" evidence="3">
    <location>
        <position position="2"/>
    </location>
</feature>
<feature type="mutagenesis site" description="Greatly reduced release of new viral particles." evidence="6">
    <original>PPPY</original>
    <variation>AAAA</variation>
    <location>
        <begin position="100"/>
        <end position="103"/>
    </location>
</feature>
<accession>P0DOI1</accession>
<sequence length="571" mass="62261">MGNSPSYNPPAGISPSDWLNLLQSAQRLNPRPSPSDFTDLKNYIHWFHKTQKKPWTFTSGGPASCPPGKFGRVPLVLATLNEVLSNDEGAPGASAPEEQPPPYDPPAVLPIISEGNRNRHRAWALRELQDIKKEIENKAPGSQVWIQTLRLAILQADPTPADLEQLCQYIASPVDQTAHMTSLTAAIAAEAANTLQGFNPKMGTLTQQSAQPNAGDLRSQYQNLWLQAWKNLPTRPSVQPWSTIVQGPAESYVEFVNRLQISLADNLPDGVPKEPIIDSLSYANANKECQQILQGRGLVAAPVGQKLQACAHWAPKTKQPAILVHTPGPKMPGPRQPAPKRPPPGPCYRCLKEGHWARDCPTKTTGPPPGPCPICKDPSHWKRDCPTLKSKKLIEGGPSAPQIITPITDSLSEAELECLLSIPLARSRPSVAVYLSGPWLQPSQNQALMLVDTGAENTVLPQNWLVRDYPRTPAAVLGAGGISRNRYNWLQGPLTLALKPEGPFITIPKILVDTFDKWQILGRDVLSRLQASISIPEEVHPPVVGVLDAPPSHIGLEHLPPPPEVPQFPLN</sequence>
<evidence type="ECO:0000250" key="1">
    <source>
        <dbReference type="UniProtKB" id="P03345"/>
    </source>
</evidence>
<evidence type="ECO:0000250" key="2">
    <source>
        <dbReference type="UniProtKB" id="P10274"/>
    </source>
</evidence>
<evidence type="ECO:0000255" key="3"/>
<evidence type="ECO:0000255" key="4">
    <source>
        <dbReference type="PROSITE-ProRule" id="PRU00047"/>
    </source>
</evidence>
<evidence type="ECO:0000255" key="5">
    <source>
        <dbReference type="PROSITE-ProRule" id="PRU00275"/>
    </source>
</evidence>
<evidence type="ECO:0000269" key="6">
    <source>
    </source>
</evidence>
<evidence type="ECO:0000269" key="7">
    <source>
    </source>
</evidence>
<evidence type="ECO:0000305" key="8"/>
<keyword id="KW-0064">Aspartyl protease</keyword>
<keyword id="KW-0167">Capsid protein</keyword>
<keyword id="KW-0945">Host-virus interaction</keyword>
<keyword id="KW-0378">Hydrolase</keyword>
<keyword id="KW-0449">Lipoprotein</keyword>
<keyword id="KW-0479">Metal-binding</keyword>
<keyword id="KW-0519">Myristate</keyword>
<keyword id="KW-0597">Phosphoprotein</keyword>
<keyword id="KW-0645">Protease</keyword>
<keyword id="KW-0677">Repeat</keyword>
<keyword id="KW-0688">Ribosomal frameshifting</keyword>
<keyword id="KW-1198">Viral budding</keyword>
<keyword id="KW-1187">Viral budding via the host ESCRT complexes</keyword>
<keyword id="KW-0468">Viral matrix protein</keyword>
<keyword id="KW-0543">Viral nucleoprotein</keyword>
<keyword id="KW-1188">Viral release from host cell</keyword>
<keyword id="KW-0946">Virion</keyword>
<keyword id="KW-0862">Zinc</keyword>
<keyword id="KW-0863">Zinc-finger</keyword>
<dbReference type="EC" id="3.4.23.-" evidence="5"/>
<dbReference type="EMBL" id="D00647">
    <property type="status" value="NOT_ANNOTATED_CDS"/>
    <property type="molecule type" value="Genomic_DNA"/>
</dbReference>
<dbReference type="SMR" id="P0DOI1"/>
<dbReference type="GO" id="GO:0019013">
    <property type="term" value="C:viral nucleocapsid"/>
    <property type="evidence" value="ECO:0007669"/>
    <property type="project" value="UniProtKB-KW"/>
</dbReference>
<dbReference type="GO" id="GO:0004190">
    <property type="term" value="F:aspartic-type endopeptidase activity"/>
    <property type="evidence" value="ECO:0007669"/>
    <property type="project" value="UniProtKB-KW"/>
</dbReference>
<dbReference type="GO" id="GO:0003676">
    <property type="term" value="F:nucleic acid binding"/>
    <property type="evidence" value="ECO:0007669"/>
    <property type="project" value="InterPro"/>
</dbReference>
<dbReference type="GO" id="GO:0039660">
    <property type="term" value="F:structural constituent of virion"/>
    <property type="evidence" value="ECO:0007669"/>
    <property type="project" value="UniProtKB-KW"/>
</dbReference>
<dbReference type="GO" id="GO:0008270">
    <property type="term" value="F:zinc ion binding"/>
    <property type="evidence" value="ECO:0007669"/>
    <property type="project" value="UniProtKB-KW"/>
</dbReference>
<dbReference type="GO" id="GO:0006508">
    <property type="term" value="P:proteolysis"/>
    <property type="evidence" value="ECO:0007669"/>
    <property type="project" value="UniProtKB-KW"/>
</dbReference>
<dbReference type="GO" id="GO:0039702">
    <property type="term" value="P:viral budding via host ESCRT complex"/>
    <property type="evidence" value="ECO:0007669"/>
    <property type="project" value="UniProtKB-KW"/>
</dbReference>
<dbReference type="GO" id="GO:0075523">
    <property type="term" value="P:viral translational frameshifting"/>
    <property type="evidence" value="ECO:0007669"/>
    <property type="project" value="UniProtKB-KW"/>
</dbReference>
<dbReference type="FunFam" id="4.10.60.10:FF:000119">
    <property type="entry name" value="Gag polyprotein"/>
    <property type="match status" value="1"/>
</dbReference>
<dbReference type="FunFam" id="1.10.375.10:FF:000005">
    <property type="entry name" value="Gag-pro-pol polyprotein"/>
    <property type="match status" value="1"/>
</dbReference>
<dbReference type="Gene3D" id="1.10.1200.30">
    <property type="match status" value="1"/>
</dbReference>
<dbReference type="Gene3D" id="2.40.70.10">
    <property type="entry name" value="Acid Proteases"/>
    <property type="match status" value="1"/>
</dbReference>
<dbReference type="Gene3D" id="1.10.375.10">
    <property type="entry name" value="Human Immunodeficiency Virus Type 1 Capsid Protein"/>
    <property type="match status" value="1"/>
</dbReference>
<dbReference type="Gene3D" id="4.10.60.10">
    <property type="entry name" value="Zinc finger, CCHC-type"/>
    <property type="match status" value="1"/>
</dbReference>
<dbReference type="InterPro" id="IPR003139">
    <property type="entry name" value="D_retro_matrix"/>
</dbReference>
<dbReference type="InterPro" id="IPR045345">
    <property type="entry name" value="Gag_p24_C"/>
</dbReference>
<dbReference type="InterPro" id="IPR001995">
    <property type="entry name" value="Peptidase_A2_cat"/>
</dbReference>
<dbReference type="InterPro" id="IPR021109">
    <property type="entry name" value="Peptidase_aspartic_dom_sf"/>
</dbReference>
<dbReference type="InterPro" id="IPR050195">
    <property type="entry name" value="Primate_lentivir_Gag_pol-like"/>
</dbReference>
<dbReference type="InterPro" id="IPR018061">
    <property type="entry name" value="Retropepsins"/>
</dbReference>
<dbReference type="InterPro" id="IPR008916">
    <property type="entry name" value="Retrov_capsid_C"/>
</dbReference>
<dbReference type="InterPro" id="IPR008919">
    <property type="entry name" value="Retrov_capsid_N"/>
</dbReference>
<dbReference type="InterPro" id="IPR010999">
    <property type="entry name" value="Retrovr_matrix"/>
</dbReference>
<dbReference type="InterPro" id="IPR001878">
    <property type="entry name" value="Znf_CCHC"/>
</dbReference>
<dbReference type="InterPro" id="IPR036875">
    <property type="entry name" value="Znf_CCHC_sf"/>
</dbReference>
<dbReference type="PANTHER" id="PTHR40389">
    <property type="entry name" value="ENDOGENOUS RETROVIRUS GROUP K MEMBER 24 GAG POLYPROTEIN-RELATED"/>
    <property type="match status" value="1"/>
</dbReference>
<dbReference type="PANTHER" id="PTHR40389:SF3">
    <property type="entry name" value="IGE-BINDING PROTEIN"/>
    <property type="match status" value="1"/>
</dbReference>
<dbReference type="Pfam" id="PF02228">
    <property type="entry name" value="Gag_p19"/>
    <property type="match status" value="1"/>
</dbReference>
<dbReference type="Pfam" id="PF00607">
    <property type="entry name" value="Gag_p24"/>
    <property type="match status" value="1"/>
</dbReference>
<dbReference type="Pfam" id="PF19317">
    <property type="entry name" value="Gag_p24_C"/>
    <property type="match status" value="1"/>
</dbReference>
<dbReference type="Pfam" id="PF00077">
    <property type="entry name" value="RVP"/>
    <property type="match status" value="1"/>
</dbReference>
<dbReference type="Pfam" id="PF00098">
    <property type="entry name" value="zf-CCHC"/>
    <property type="match status" value="1"/>
</dbReference>
<dbReference type="SMART" id="SM00343">
    <property type="entry name" value="ZnF_C2HC"/>
    <property type="match status" value="2"/>
</dbReference>
<dbReference type="SUPFAM" id="SSF50630">
    <property type="entry name" value="Acid proteases"/>
    <property type="match status" value="1"/>
</dbReference>
<dbReference type="SUPFAM" id="SSF47836">
    <property type="entry name" value="Retroviral matrix proteins"/>
    <property type="match status" value="1"/>
</dbReference>
<dbReference type="SUPFAM" id="SSF47353">
    <property type="entry name" value="Retrovirus capsid dimerization domain-like"/>
    <property type="match status" value="1"/>
</dbReference>
<dbReference type="SUPFAM" id="SSF47943">
    <property type="entry name" value="Retrovirus capsid protein, N-terminal core domain"/>
    <property type="match status" value="1"/>
</dbReference>
<dbReference type="SUPFAM" id="SSF57756">
    <property type="entry name" value="Retrovirus zinc finger-like domains"/>
    <property type="match status" value="1"/>
</dbReference>
<dbReference type="PROSITE" id="PS50175">
    <property type="entry name" value="ASP_PROT_RETROV"/>
    <property type="match status" value="1"/>
</dbReference>
<dbReference type="PROSITE" id="PS00141">
    <property type="entry name" value="ASP_PROTEASE"/>
    <property type="match status" value="1"/>
</dbReference>
<dbReference type="PROSITE" id="PS50158">
    <property type="entry name" value="ZF_CCHC"/>
    <property type="match status" value="1"/>
</dbReference>